<organism>
    <name type="scientific">Symbiobacterium thermophilum (strain DSM 24528 / JCM 14929 / IAM 14863 / T)</name>
    <dbReference type="NCBI Taxonomy" id="292459"/>
    <lineage>
        <taxon>Bacteria</taxon>
        <taxon>Bacillati</taxon>
        <taxon>Bacillota</taxon>
        <taxon>Clostridia</taxon>
        <taxon>Eubacteriales</taxon>
        <taxon>Symbiobacteriaceae</taxon>
        <taxon>Symbiobacterium</taxon>
    </lineage>
</organism>
<protein>
    <recommendedName>
        <fullName evidence="1">Cell division topological specificity factor</fullName>
    </recommendedName>
</protein>
<proteinExistence type="inferred from homology"/>
<gene>
    <name evidence="1" type="primary">minE</name>
    <name type="ordered locus">STH377</name>
</gene>
<reference key="1">
    <citation type="journal article" date="2004" name="Nucleic Acids Res.">
        <title>Genome sequence of Symbiobacterium thermophilum, an uncultivable bacterium that depends on microbial commensalism.</title>
        <authorList>
            <person name="Ueda K."/>
            <person name="Yamashita A."/>
            <person name="Ishikawa J."/>
            <person name="Shimada M."/>
            <person name="Watsuji T."/>
            <person name="Morimura K."/>
            <person name="Ikeda H."/>
            <person name="Hattori M."/>
            <person name="Beppu T."/>
        </authorList>
    </citation>
    <scope>NUCLEOTIDE SEQUENCE [LARGE SCALE GENOMIC DNA]</scope>
    <source>
        <strain>DSM 24528 / JCM 14929 / IAM 14863 / T</strain>
    </source>
</reference>
<keyword id="KW-0131">Cell cycle</keyword>
<keyword id="KW-0132">Cell division</keyword>
<keyword id="KW-1185">Reference proteome</keyword>
<feature type="chain" id="PRO_0000298194" description="Cell division topological specificity factor">
    <location>
        <begin position="1"/>
        <end position="92"/>
    </location>
</feature>
<name>MINE_SYMTH</name>
<dbReference type="EMBL" id="AP006840">
    <property type="protein sequence ID" value="BAD39362.1"/>
    <property type="molecule type" value="Genomic_DNA"/>
</dbReference>
<dbReference type="RefSeq" id="WP_011194511.1">
    <property type="nucleotide sequence ID" value="NC_006177.1"/>
</dbReference>
<dbReference type="SMR" id="Q67SI1"/>
<dbReference type="STRING" id="292459.STH377"/>
<dbReference type="KEGG" id="sth:STH377"/>
<dbReference type="eggNOG" id="COG0851">
    <property type="taxonomic scope" value="Bacteria"/>
</dbReference>
<dbReference type="HOGENOM" id="CLU_137929_1_1_9"/>
<dbReference type="OrthoDB" id="9796578at2"/>
<dbReference type="Proteomes" id="UP000000417">
    <property type="component" value="Chromosome"/>
</dbReference>
<dbReference type="GO" id="GO:0051301">
    <property type="term" value="P:cell division"/>
    <property type="evidence" value="ECO:0007669"/>
    <property type="project" value="UniProtKB-KW"/>
</dbReference>
<dbReference type="GO" id="GO:0032955">
    <property type="term" value="P:regulation of division septum assembly"/>
    <property type="evidence" value="ECO:0007669"/>
    <property type="project" value="InterPro"/>
</dbReference>
<dbReference type="Gene3D" id="3.30.1070.10">
    <property type="entry name" value="Cell division topological specificity factor MinE"/>
    <property type="match status" value="1"/>
</dbReference>
<dbReference type="HAMAP" id="MF_00262">
    <property type="entry name" value="MinE"/>
    <property type="match status" value="1"/>
</dbReference>
<dbReference type="InterPro" id="IPR005527">
    <property type="entry name" value="MinE"/>
</dbReference>
<dbReference type="InterPro" id="IPR036707">
    <property type="entry name" value="MinE_sf"/>
</dbReference>
<dbReference type="NCBIfam" id="TIGR01215">
    <property type="entry name" value="minE"/>
    <property type="match status" value="1"/>
</dbReference>
<dbReference type="NCBIfam" id="NF001422">
    <property type="entry name" value="PRK00296.1"/>
    <property type="match status" value="1"/>
</dbReference>
<dbReference type="Pfam" id="PF03776">
    <property type="entry name" value="MinE"/>
    <property type="match status" value="1"/>
</dbReference>
<dbReference type="SUPFAM" id="SSF55229">
    <property type="entry name" value="Cell division protein MinE topological specificity domain"/>
    <property type="match status" value="1"/>
</dbReference>
<sequence>MLDLISRVFGRDHSSADIARERLRLVLVHDRTNVSPQFLETLKEELIEVISRYMEIEEEGMDVTLQTAENQVALVANIPVRRMKRAAVGSKR</sequence>
<evidence type="ECO:0000255" key="1">
    <source>
        <dbReference type="HAMAP-Rule" id="MF_00262"/>
    </source>
</evidence>
<comment type="function">
    <text evidence="1">Prevents the cell division inhibition by proteins MinC and MinD at internal division sites while permitting inhibition at polar sites. This ensures cell division at the proper site by restricting the formation of a division septum at the midpoint of the long axis of the cell.</text>
</comment>
<comment type="similarity">
    <text evidence="1">Belongs to the MinE family.</text>
</comment>
<accession>Q67SI1</accession>